<organism>
    <name type="scientific">Rhodopseudomonas palustris (strain BisA53)</name>
    <dbReference type="NCBI Taxonomy" id="316055"/>
    <lineage>
        <taxon>Bacteria</taxon>
        <taxon>Pseudomonadati</taxon>
        <taxon>Pseudomonadota</taxon>
        <taxon>Alphaproteobacteria</taxon>
        <taxon>Hyphomicrobiales</taxon>
        <taxon>Nitrobacteraceae</taxon>
        <taxon>Rhodopseudomonas</taxon>
    </lineage>
</organism>
<dbReference type="EC" id="7.1.1.-" evidence="1"/>
<dbReference type="EMBL" id="CP000463">
    <property type="protein sequence ID" value="ABJ05661.1"/>
    <property type="molecule type" value="Genomic_DNA"/>
</dbReference>
<dbReference type="SMR" id="Q07QX3"/>
<dbReference type="STRING" id="316055.RPE_1712"/>
<dbReference type="KEGG" id="rpe:RPE_1712"/>
<dbReference type="eggNOG" id="COG0649">
    <property type="taxonomic scope" value="Bacteria"/>
</dbReference>
<dbReference type="HOGENOM" id="CLU_015134_3_2_5"/>
<dbReference type="OrthoDB" id="9801496at2"/>
<dbReference type="GO" id="GO:0030964">
    <property type="term" value="C:NADH dehydrogenase complex"/>
    <property type="evidence" value="ECO:0007669"/>
    <property type="project" value="InterPro"/>
</dbReference>
<dbReference type="GO" id="GO:0005886">
    <property type="term" value="C:plasma membrane"/>
    <property type="evidence" value="ECO:0007669"/>
    <property type="project" value="UniProtKB-SubCell"/>
</dbReference>
<dbReference type="GO" id="GO:0051287">
    <property type="term" value="F:NAD binding"/>
    <property type="evidence" value="ECO:0007669"/>
    <property type="project" value="InterPro"/>
</dbReference>
<dbReference type="GO" id="GO:0008137">
    <property type="term" value="F:NADH dehydrogenase (ubiquinone) activity"/>
    <property type="evidence" value="ECO:0007669"/>
    <property type="project" value="InterPro"/>
</dbReference>
<dbReference type="GO" id="GO:0050136">
    <property type="term" value="F:NADH:ubiquinone reductase (non-electrogenic) activity"/>
    <property type="evidence" value="ECO:0007669"/>
    <property type="project" value="UniProtKB-UniRule"/>
</dbReference>
<dbReference type="GO" id="GO:0048038">
    <property type="term" value="F:quinone binding"/>
    <property type="evidence" value="ECO:0007669"/>
    <property type="project" value="UniProtKB-KW"/>
</dbReference>
<dbReference type="Gene3D" id="1.10.645.10">
    <property type="entry name" value="Cytochrome-c3 Hydrogenase, chain B"/>
    <property type="match status" value="1"/>
</dbReference>
<dbReference type="Gene3D" id="3.30.460.80">
    <property type="entry name" value="NADH:ubiquinone oxidoreductase, 30kDa subunit"/>
    <property type="match status" value="1"/>
</dbReference>
<dbReference type="HAMAP" id="MF_01359">
    <property type="entry name" value="NDH1_NuoCD_1"/>
    <property type="match status" value="1"/>
</dbReference>
<dbReference type="HAMAP" id="MF_01358">
    <property type="entry name" value="NDH1_NuoD"/>
    <property type="match status" value="1"/>
</dbReference>
<dbReference type="InterPro" id="IPR023062">
    <property type="entry name" value="NADH_DH_suCD"/>
</dbReference>
<dbReference type="InterPro" id="IPR001135">
    <property type="entry name" value="NADH_Q_OxRdtase_suD"/>
</dbReference>
<dbReference type="InterPro" id="IPR037232">
    <property type="entry name" value="NADH_quin_OxRdtase_su_C/D-like"/>
</dbReference>
<dbReference type="InterPro" id="IPR001268">
    <property type="entry name" value="NADH_UbQ_OxRdtase_30kDa_su"/>
</dbReference>
<dbReference type="InterPro" id="IPR014029">
    <property type="entry name" value="NADH_UbQ_OxRdtase_49kDa_CS"/>
</dbReference>
<dbReference type="InterPro" id="IPR022885">
    <property type="entry name" value="NDH1_su_D/H"/>
</dbReference>
<dbReference type="InterPro" id="IPR029014">
    <property type="entry name" value="NiFe-Hase_large"/>
</dbReference>
<dbReference type="NCBIfam" id="TIGR01962">
    <property type="entry name" value="NuoD"/>
    <property type="match status" value="1"/>
</dbReference>
<dbReference type="NCBIfam" id="NF004739">
    <property type="entry name" value="PRK06075.1"/>
    <property type="match status" value="1"/>
</dbReference>
<dbReference type="NCBIfam" id="NF008728">
    <property type="entry name" value="PRK11742.1"/>
    <property type="match status" value="1"/>
</dbReference>
<dbReference type="PANTHER" id="PTHR11993:SF45">
    <property type="entry name" value="NADH-QUINONE OXIDOREDUCTASE SUBUNIT C_D"/>
    <property type="match status" value="1"/>
</dbReference>
<dbReference type="PANTHER" id="PTHR11993">
    <property type="entry name" value="NADH-UBIQUINONE OXIDOREDUCTASE 49 KDA SUBUNIT"/>
    <property type="match status" value="1"/>
</dbReference>
<dbReference type="Pfam" id="PF00329">
    <property type="entry name" value="Complex1_30kDa"/>
    <property type="match status" value="1"/>
</dbReference>
<dbReference type="Pfam" id="PF00346">
    <property type="entry name" value="Complex1_49kDa"/>
    <property type="match status" value="1"/>
</dbReference>
<dbReference type="SUPFAM" id="SSF56762">
    <property type="entry name" value="HydB/Nqo4-like"/>
    <property type="match status" value="1"/>
</dbReference>
<dbReference type="SUPFAM" id="SSF143243">
    <property type="entry name" value="Nqo5-like"/>
    <property type="match status" value="1"/>
</dbReference>
<dbReference type="PROSITE" id="PS00535">
    <property type="entry name" value="COMPLEX1_49K"/>
    <property type="match status" value="1"/>
</dbReference>
<feature type="chain" id="PRO_0000358675" description="NADH-quinone oxidoreductase subunit C/D">
    <location>
        <begin position="1"/>
        <end position="581"/>
    </location>
</feature>
<feature type="region of interest" description="NADH dehydrogenase I subunit C" evidence="1">
    <location>
        <begin position="1"/>
        <end position="172"/>
    </location>
</feature>
<feature type="region of interest" description="NADH dehydrogenase I subunit D" evidence="1">
    <location>
        <begin position="196"/>
        <end position="581"/>
    </location>
</feature>
<proteinExistence type="inferred from homology"/>
<comment type="function">
    <text evidence="1">NDH-1 shuttles electrons from NADH, via FMN and iron-sulfur (Fe-S) centers, to quinones in the respiratory chain. The immediate electron acceptor for the enzyme in this species is believed to be ubiquinone. Couples the redox reaction to proton translocation (for every two electrons transferred, four hydrogen ions are translocated across the cytoplasmic membrane), and thus conserves the redox energy in a proton gradient.</text>
</comment>
<comment type="catalytic activity">
    <reaction evidence="1">
        <text>a quinone + NADH + 5 H(+)(in) = a quinol + NAD(+) + 4 H(+)(out)</text>
        <dbReference type="Rhea" id="RHEA:57888"/>
        <dbReference type="ChEBI" id="CHEBI:15378"/>
        <dbReference type="ChEBI" id="CHEBI:24646"/>
        <dbReference type="ChEBI" id="CHEBI:57540"/>
        <dbReference type="ChEBI" id="CHEBI:57945"/>
        <dbReference type="ChEBI" id="CHEBI:132124"/>
    </reaction>
</comment>
<comment type="subunit">
    <text evidence="1">NDH-1 is composed of 13 different subunits. Subunits NuoB, CD, E, F, and G constitute the peripheral sector of the complex.</text>
</comment>
<comment type="subcellular location">
    <subcellularLocation>
        <location evidence="1">Cell inner membrane</location>
        <topology evidence="1">Peripheral membrane protein</topology>
        <orientation evidence="1">Cytoplasmic side</orientation>
    </subcellularLocation>
</comment>
<comment type="similarity">
    <text evidence="1">In the N-terminal section; belongs to the complex I 30 kDa subunit family.</text>
</comment>
<comment type="similarity">
    <text evidence="1">In the C-terminal section; belongs to the complex I 49 kDa subunit family.</text>
</comment>
<keyword id="KW-0997">Cell inner membrane</keyword>
<keyword id="KW-1003">Cell membrane</keyword>
<keyword id="KW-0472">Membrane</keyword>
<keyword id="KW-0511">Multifunctional enzyme</keyword>
<keyword id="KW-0520">NAD</keyword>
<keyword id="KW-0874">Quinone</keyword>
<keyword id="KW-1278">Translocase</keyword>
<keyword id="KW-0813">Transport</keyword>
<keyword id="KW-0830">Ubiquinone</keyword>
<protein>
    <recommendedName>
        <fullName evidence="1">NADH-quinone oxidoreductase subunit C/D</fullName>
        <ecNumber evidence="1">7.1.1.-</ecNumber>
    </recommendedName>
    <alternativeName>
        <fullName evidence="1">NADH dehydrogenase I subunit C/D</fullName>
    </alternativeName>
    <alternativeName>
        <fullName evidence="1">NDH-1 subunit C/D</fullName>
    </alternativeName>
</protein>
<accession>Q07QX3</accession>
<sequence length="581" mass="64832">MSGAELISDLRARFGQAVLSEQSTNDAFPTLWIAPDAAPAVHRYLKHDVAKPFALLADLWAIDETARKHREGQPPSGITIASHLISLGRNADIVLKCPLDAKAPRATSIASVYPNADWYEREAFDLFGVHFDGRHDHRRILLPPLWEGHPLRKDQPARATEKPPFVMTAARFDAEEKALMIDPEALGLPTERDGVELMILNYGPHSMATHGVFRVVLALDGEEIVAARPDIGFHHRGAEKMGERQSWHQFIPYTDRIDYLGGVISEMPYLQAVERLCGITVPDRAKTIRIMLSEIYRIMNHLLLYGTMAQDCGAMSPVFYMFTDRERGYRIIEAITGARMHPGWFRIGGVAADLPEGWDRLVREFLDWMPKRLDDYAGMVLGNEIFRGRTVGIAAYDTATALDWGITGPGLRATGCDWDLRKARPYGGYENFEFEVPTGNNGDCYDRVLVRVEEMRQSLRIIRQCLDHMPSGPIKADHPLTTPPPRERMLHDIDTLIHHFVGVSWGPVVPAGEATGQAETVRGLTQYALVSDGATCSYRTRIRTPSFAHLQAVSAIAPGLTVADLVAYLGSIDYVMSDVDR</sequence>
<name>NUOCD_RHOP5</name>
<gene>
    <name evidence="1" type="primary">nuoC</name>
    <name evidence="1" type="synonym">nuoCD</name>
    <name evidence="1" type="synonym">nuoD</name>
    <name type="ordered locus">RPE_1712</name>
</gene>
<evidence type="ECO:0000255" key="1">
    <source>
        <dbReference type="HAMAP-Rule" id="MF_01359"/>
    </source>
</evidence>
<reference key="1">
    <citation type="submission" date="2006-09" db="EMBL/GenBank/DDBJ databases">
        <title>Complete sequence of Rhodopseudomonas palustris BisA53.</title>
        <authorList>
            <consortium name="US DOE Joint Genome Institute"/>
            <person name="Copeland A."/>
            <person name="Lucas S."/>
            <person name="Lapidus A."/>
            <person name="Barry K."/>
            <person name="Detter J.C."/>
            <person name="Glavina del Rio T."/>
            <person name="Hammon N."/>
            <person name="Israni S."/>
            <person name="Dalin E."/>
            <person name="Tice H."/>
            <person name="Pitluck S."/>
            <person name="Chain P."/>
            <person name="Malfatti S."/>
            <person name="Shin M."/>
            <person name="Vergez L."/>
            <person name="Schmutz J."/>
            <person name="Larimer F."/>
            <person name="Land M."/>
            <person name="Hauser L."/>
            <person name="Pelletier D.A."/>
            <person name="Kyrpides N."/>
            <person name="Kim E."/>
            <person name="Harwood C.S."/>
            <person name="Oda Y."/>
            <person name="Richardson P."/>
        </authorList>
    </citation>
    <scope>NUCLEOTIDE SEQUENCE [LARGE SCALE GENOMIC DNA]</scope>
    <source>
        <strain>BisA53</strain>
    </source>
</reference>